<name>PTH_LACGA</name>
<gene>
    <name evidence="1" type="primary">pth</name>
    <name type="ordered locus">LGAS_0270</name>
</gene>
<reference key="1">
    <citation type="journal article" date="2006" name="Proc. Natl. Acad. Sci. U.S.A.">
        <title>Comparative genomics of the lactic acid bacteria.</title>
        <authorList>
            <person name="Makarova K.S."/>
            <person name="Slesarev A."/>
            <person name="Wolf Y.I."/>
            <person name="Sorokin A."/>
            <person name="Mirkin B."/>
            <person name="Koonin E.V."/>
            <person name="Pavlov A."/>
            <person name="Pavlova N."/>
            <person name="Karamychev V."/>
            <person name="Polouchine N."/>
            <person name="Shakhova V."/>
            <person name="Grigoriev I."/>
            <person name="Lou Y."/>
            <person name="Rohksar D."/>
            <person name="Lucas S."/>
            <person name="Huang K."/>
            <person name="Goodstein D.M."/>
            <person name="Hawkins T."/>
            <person name="Plengvidhya V."/>
            <person name="Welker D."/>
            <person name="Hughes J."/>
            <person name="Goh Y."/>
            <person name="Benson A."/>
            <person name="Baldwin K."/>
            <person name="Lee J.-H."/>
            <person name="Diaz-Muniz I."/>
            <person name="Dosti B."/>
            <person name="Smeianov V."/>
            <person name="Wechter W."/>
            <person name="Barabote R."/>
            <person name="Lorca G."/>
            <person name="Altermann E."/>
            <person name="Barrangou R."/>
            <person name="Ganesan B."/>
            <person name="Xie Y."/>
            <person name="Rawsthorne H."/>
            <person name="Tamir D."/>
            <person name="Parker C."/>
            <person name="Breidt F."/>
            <person name="Broadbent J.R."/>
            <person name="Hutkins R."/>
            <person name="O'Sullivan D."/>
            <person name="Steele J."/>
            <person name="Unlu G."/>
            <person name="Saier M.H. Jr."/>
            <person name="Klaenhammer T."/>
            <person name="Richardson P."/>
            <person name="Kozyavkin S."/>
            <person name="Weimer B.C."/>
            <person name="Mills D.A."/>
        </authorList>
    </citation>
    <scope>NUCLEOTIDE SEQUENCE [LARGE SCALE GENOMIC DNA]</scope>
    <source>
        <strain>ATCC 33323 / DSM 20243 / BCRC 14619 / CIP 102991 / JCM 1131 / KCTC 3163 / NCIMB 11718 / NCTC 13722 / AM63</strain>
    </source>
</reference>
<accession>Q046E4</accession>
<keyword id="KW-0963">Cytoplasm</keyword>
<keyword id="KW-0378">Hydrolase</keyword>
<keyword id="KW-0694">RNA-binding</keyword>
<keyword id="KW-0820">tRNA-binding</keyword>
<organism>
    <name type="scientific">Lactobacillus gasseri (strain ATCC 33323 / DSM 20243 / BCRC 14619 / CIP 102991 / JCM 1131 / KCTC 3163 / NCIMB 11718 / NCTC 13722 / AM63)</name>
    <dbReference type="NCBI Taxonomy" id="324831"/>
    <lineage>
        <taxon>Bacteria</taxon>
        <taxon>Bacillati</taxon>
        <taxon>Bacillota</taxon>
        <taxon>Bacilli</taxon>
        <taxon>Lactobacillales</taxon>
        <taxon>Lactobacillaceae</taxon>
        <taxon>Lactobacillus</taxon>
    </lineage>
</organism>
<comment type="function">
    <text evidence="1">Hydrolyzes ribosome-free peptidyl-tRNAs (with 1 or more amino acids incorporated), which drop off the ribosome during protein synthesis, or as a result of ribosome stalling.</text>
</comment>
<comment type="function">
    <text evidence="1">Catalyzes the release of premature peptidyl moieties from peptidyl-tRNA molecules trapped in stalled 50S ribosomal subunits, and thus maintains levels of free tRNAs and 50S ribosomes.</text>
</comment>
<comment type="catalytic activity">
    <reaction evidence="1">
        <text>an N-acyl-L-alpha-aminoacyl-tRNA + H2O = an N-acyl-L-amino acid + a tRNA + H(+)</text>
        <dbReference type="Rhea" id="RHEA:54448"/>
        <dbReference type="Rhea" id="RHEA-COMP:10123"/>
        <dbReference type="Rhea" id="RHEA-COMP:13883"/>
        <dbReference type="ChEBI" id="CHEBI:15377"/>
        <dbReference type="ChEBI" id="CHEBI:15378"/>
        <dbReference type="ChEBI" id="CHEBI:59874"/>
        <dbReference type="ChEBI" id="CHEBI:78442"/>
        <dbReference type="ChEBI" id="CHEBI:138191"/>
        <dbReference type="EC" id="3.1.1.29"/>
    </reaction>
</comment>
<comment type="subunit">
    <text evidence="1">Monomer.</text>
</comment>
<comment type="subcellular location">
    <subcellularLocation>
        <location evidence="1">Cytoplasm</location>
    </subcellularLocation>
</comment>
<comment type="similarity">
    <text evidence="1">Belongs to the PTH family.</text>
</comment>
<evidence type="ECO:0000255" key="1">
    <source>
        <dbReference type="HAMAP-Rule" id="MF_00083"/>
    </source>
</evidence>
<feature type="chain" id="PRO_1000010601" description="Peptidyl-tRNA hydrolase">
    <location>
        <begin position="1"/>
        <end position="185"/>
    </location>
</feature>
<feature type="active site" description="Proton acceptor" evidence="1">
    <location>
        <position position="19"/>
    </location>
</feature>
<feature type="binding site" evidence="1">
    <location>
        <position position="14"/>
    </location>
    <ligand>
        <name>tRNA</name>
        <dbReference type="ChEBI" id="CHEBI:17843"/>
    </ligand>
</feature>
<feature type="binding site" evidence="1">
    <location>
        <position position="64"/>
    </location>
    <ligand>
        <name>tRNA</name>
        <dbReference type="ChEBI" id="CHEBI:17843"/>
    </ligand>
</feature>
<feature type="binding site" evidence="1">
    <location>
        <position position="66"/>
    </location>
    <ligand>
        <name>tRNA</name>
        <dbReference type="ChEBI" id="CHEBI:17843"/>
    </ligand>
</feature>
<feature type="binding site" evidence="1">
    <location>
        <position position="112"/>
    </location>
    <ligand>
        <name>tRNA</name>
        <dbReference type="ChEBI" id="CHEBI:17843"/>
    </ligand>
</feature>
<feature type="site" description="Discriminates between blocked and unblocked aminoacyl-tRNA" evidence="1">
    <location>
        <position position="9"/>
    </location>
</feature>
<feature type="site" description="Stabilizes the basic form of H active site to accept a proton" evidence="1">
    <location>
        <position position="91"/>
    </location>
</feature>
<sequence length="185" mass="20891">MKLIAGLGNPGKKYDQTKHNTGFMALDHYLSKNNLDLDKDKFEGLWTKQKVNGEDVIFLEPQTFMNDSGKSIAQVANFFKIAPEDILVIHDDMDMPIGKIRIRANGKSGGHNGIKSIMACLGTNNFNRLKIGIRHPQKESVVSWVLSPFNDEQQKLMDAAFEVSENIINDFIKGKNAQYLMNQYN</sequence>
<protein>
    <recommendedName>
        <fullName evidence="1">Peptidyl-tRNA hydrolase</fullName>
        <shortName evidence="1">Pth</shortName>
        <ecNumber evidence="1">3.1.1.29</ecNumber>
    </recommendedName>
</protein>
<dbReference type="EC" id="3.1.1.29" evidence="1"/>
<dbReference type="EMBL" id="CP000413">
    <property type="protein sequence ID" value="ABJ59678.1"/>
    <property type="molecule type" value="Genomic_DNA"/>
</dbReference>
<dbReference type="RefSeq" id="WP_003647845.1">
    <property type="nucleotide sequence ID" value="NZ_WBMG01000001.1"/>
</dbReference>
<dbReference type="SMR" id="Q046E4"/>
<dbReference type="GeneID" id="29638403"/>
<dbReference type="KEGG" id="lga:LGAS_0270"/>
<dbReference type="HOGENOM" id="CLU_062456_4_1_9"/>
<dbReference type="BioCyc" id="LGAS324831:G1G6Y-268-MONOMER"/>
<dbReference type="Proteomes" id="UP000000664">
    <property type="component" value="Chromosome"/>
</dbReference>
<dbReference type="GO" id="GO:0005737">
    <property type="term" value="C:cytoplasm"/>
    <property type="evidence" value="ECO:0007669"/>
    <property type="project" value="UniProtKB-SubCell"/>
</dbReference>
<dbReference type="GO" id="GO:0004045">
    <property type="term" value="F:peptidyl-tRNA hydrolase activity"/>
    <property type="evidence" value="ECO:0007669"/>
    <property type="project" value="UniProtKB-UniRule"/>
</dbReference>
<dbReference type="GO" id="GO:0000049">
    <property type="term" value="F:tRNA binding"/>
    <property type="evidence" value="ECO:0007669"/>
    <property type="project" value="UniProtKB-UniRule"/>
</dbReference>
<dbReference type="GO" id="GO:0006515">
    <property type="term" value="P:protein quality control for misfolded or incompletely synthesized proteins"/>
    <property type="evidence" value="ECO:0007669"/>
    <property type="project" value="UniProtKB-UniRule"/>
</dbReference>
<dbReference type="GO" id="GO:0072344">
    <property type="term" value="P:rescue of stalled ribosome"/>
    <property type="evidence" value="ECO:0007669"/>
    <property type="project" value="UniProtKB-UniRule"/>
</dbReference>
<dbReference type="CDD" id="cd00462">
    <property type="entry name" value="PTH"/>
    <property type="match status" value="1"/>
</dbReference>
<dbReference type="FunFam" id="3.40.50.1470:FF:000001">
    <property type="entry name" value="Peptidyl-tRNA hydrolase"/>
    <property type="match status" value="1"/>
</dbReference>
<dbReference type="Gene3D" id="3.40.50.1470">
    <property type="entry name" value="Peptidyl-tRNA hydrolase"/>
    <property type="match status" value="1"/>
</dbReference>
<dbReference type="HAMAP" id="MF_00083">
    <property type="entry name" value="Pept_tRNA_hydro_bact"/>
    <property type="match status" value="1"/>
</dbReference>
<dbReference type="InterPro" id="IPR001328">
    <property type="entry name" value="Pept_tRNA_hydro"/>
</dbReference>
<dbReference type="InterPro" id="IPR018171">
    <property type="entry name" value="Pept_tRNA_hydro_CS"/>
</dbReference>
<dbReference type="InterPro" id="IPR036416">
    <property type="entry name" value="Pept_tRNA_hydro_sf"/>
</dbReference>
<dbReference type="NCBIfam" id="TIGR00447">
    <property type="entry name" value="pth"/>
    <property type="match status" value="1"/>
</dbReference>
<dbReference type="PANTHER" id="PTHR17224">
    <property type="entry name" value="PEPTIDYL-TRNA HYDROLASE"/>
    <property type="match status" value="1"/>
</dbReference>
<dbReference type="PANTHER" id="PTHR17224:SF1">
    <property type="entry name" value="PEPTIDYL-TRNA HYDROLASE"/>
    <property type="match status" value="1"/>
</dbReference>
<dbReference type="Pfam" id="PF01195">
    <property type="entry name" value="Pept_tRNA_hydro"/>
    <property type="match status" value="1"/>
</dbReference>
<dbReference type="SUPFAM" id="SSF53178">
    <property type="entry name" value="Peptidyl-tRNA hydrolase-like"/>
    <property type="match status" value="1"/>
</dbReference>
<dbReference type="PROSITE" id="PS01195">
    <property type="entry name" value="PEPT_TRNA_HYDROL_1"/>
    <property type="match status" value="1"/>
</dbReference>
<proteinExistence type="inferred from homology"/>